<proteinExistence type="inferred from homology"/>
<name>KITH_PSHV1</name>
<organismHost>
    <name type="scientific">Amazona oratrix</name>
    <name type="common">yellow-headed parrot</name>
    <dbReference type="NCBI Taxonomy" id="152276"/>
</organismHost>
<gene>
    <name evidence="1" type="primary">TK</name>
    <name type="ordered locus">UL23</name>
</gene>
<dbReference type="EC" id="2.7.1.21" evidence="1"/>
<dbReference type="EMBL" id="AY372243">
    <property type="protein sequence ID" value="AAQ73701.1"/>
    <property type="molecule type" value="Genomic_DNA"/>
</dbReference>
<dbReference type="RefSeq" id="NP_944395.1">
    <property type="nucleotide sequence ID" value="NC_005264.1"/>
</dbReference>
<dbReference type="SMR" id="Q6UDK9"/>
<dbReference type="GeneID" id="2656999"/>
<dbReference type="KEGG" id="vg:2656999"/>
<dbReference type="Proteomes" id="UP000006840">
    <property type="component" value="Segment"/>
</dbReference>
<dbReference type="GO" id="GO:0005524">
    <property type="term" value="F:ATP binding"/>
    <property type="evidence" value="ECO:0007669"/>
    <property type="project" value="UniProtKB-KW"/>
</dbReference>
<dbReference type="GO" id="GO:0004797">
    <property type="term" value="F:thymidine kinase activity"/>
    <property type="evidence" value="ECO:0007669"/>
    <property type="project" value="UniProtKB-EC"/>
</dbReference>
<dbReference type="GO" id="GO:0071897">
    <property type="term" value="P:DNA biosynthetic process"/>
    <property type="evidence" value="ECO:0007669"/>
    <property type="project" value="UniProtKB-KW"/>
</dbReference>
<dbReference type="GO" id="GO:0006230">
    <property type="term" value="P:TMP biosynthetic process"/>
    <property type="evidence" value="ECO:0007669"/>
    <property type="project" value="InterPro"/>
</dbReference>
<dbReference type="Gene3D" id="3.40.50.300">
    <property type="entry name" value="P-loop containing nucleotide triphosphate hydrolases"/>
    <property type="match status" value="1"/>
</dbReference>
<dbReference type="HAMAP" id="MF_04029">
    <property type="entry name" value="HSV_KITH"/>
    <property type="match status" value="1"/>
</dbReference>
<dbReference type="InterPro" id="IPR001889">
    <property type="entry name" value="Herpes_TK"/>
</dbReference>
<dbReference type="InterPro" id="IPR027417">
    <property type="entry name" value="P-loop_NTPase"/>
</dbReference>
<dbReference type="Pfam" id="PF00693">
    <property type="entry name" value="Herpes_TK"/>
    <property type="match status" value="1"/>
</dbReference>
<dbReference type="SUPFAM" id="SSF52540">
    <property type="entry name" value="P-loop containing nucleoside triphosphate hydrolases"/>
    <property type="match status" value="1"/>
</dbReference>
<comment type="function">
    <text evidence="1">Catalyzes the transfer of the gamma-phospho group of ATP to thymidine to generate dTMP in the salvage pathway of pyrimidine synthesis. The dTMP serves as a substrate for DNA polymerase during viral DNA replication. Allows the virus to be reactivated and to grow in non-proliferative cells lacking a high concentration of phosphorylated nucleic acid precursors.</text>
</comment>
<comment type="catalytic activity">
    <reaction evidence="1">
        <text>thymidine + ATP = dTMP + ADP + H(+)</text>
        <dbReference type="Rhea" id="RHEA:19129"/>
        <dbReference type="ChEBI" id="CHEBI:15378"/>
        <dbReference type="ChEBI" id="CHEBI:17748"/>
        <dbReference type="ChEBI" id="CHEBI:30616"/>
        <dbReference type="ChEBI" id="CHEBI:63528"/>
        <dbReference type="ChEBI" id="CHEBI:456216"/>
        <dbReference type="EC" id="2.7.1.21"/>
    </reaction>
</comment>
<comment type="subunit">
    <text evidence="1">Homodimer.</text>
</comment>
<comment type="similarity">
    <text evidence="1">Belongs to the herpesviridae thymidine kinase family.</text>
</comment>
<protein>
    <recommendedName>
        <fullName evidence="1">Thymidine kinase</fullName>
        <ecNumber evidence="1">2.7.1.21</ecNumber>
    </recommendedName>
</protein>
<evidence type="ECO:0000255" key="1">
    <source>
        <dbReference type="HAMAP-Rule" id="MF_04029"/>
    </source>
</evidence>
<organism>
    <name type="scientific">Psittacid herpesvirus 1 (isolate Amazon parrot/-/97-0001/1997)</name>
    <name type="common">PsHV-1</name>
    <name type="synonym">Pacheco's disease virus</name>
    <dbReference type="NCBI Taxonomy" id="670426"/>
    <lineage>
        <taxon>Viruses</taxon>
        <taxon>Duplodnaviria</taxon>
        <taxon>Heunggongvirae</taxon>
        <taxon>Peploviricota</taxon>
        <taxon>Herviviricetes</taxon>
        <taxon>Herpesvirales</taxon>
        <taxon>Orthoherpesviridae</taxon>
        <taxon>Alphaherpesvirinae</taxon>
        <taxon>Iltovirus</taxon>
        <taxon>Iltovirus psittacidalpha1</taxon>
        <taxon>Psittacid alphaherpesvirus 1</taxon>
    </lineage>
</organism>
<keyword id="KW-0067">ATP-binding</keyword>
<keyword id="KW-0237">DNA synthesis</keyword>
<keyword id="KW-0244">Early protein</keyword>
<keyword id="KW-0418">Kinase</keyword>
<keyword id="KW-0547">Nucleotide-binding</keyword>
<keyword id="KW-1185">Reference proteome</keyword>
<keyword id="KW-0808">Transferase</keyword>
<reference key="1">
    <citation type="journal article" date="2006" name="J. Virol.">
        <title>Psittacid herpesvirus 1 and infectious laryngotracheitis virus: Comparative genome sequence analysis of two avian alphaherpesviruses.</title>
        <authorList>
            <person name="Thureen D.R."/>
            <person name="Keeler C.L. Jr."/>
        </authorList>
    </citation>
    <scope>NUCLEOTIDE SEQUENCE [LARGE SCALE GENOMIC DNA]</scope>
</reference>
<accession>Q6UDK9</accession>
<sequence length="339" mass="38059">MGRIVVLYVDGAFGIGKTTVLRQIQKSAAYRFRRIYLEEPMRAWRSWFVDDHDAIREIYTTQELKDAGEIDLREASRRVCYAQVSLSAPFHIMNAVIYGIISGESEATSAHLGEGDYFVGVDRHPLASCLCFPVARFVTGYLEYTDLIALVATLPDYPRGASIAILDLSVEEQARRITERSRSGEHVNKTFLRILRNVFIIMYNTVAYLRNVSIDKACADREALEDFRGSQLESDMHKIDIQPRDDPNASETLFAVMASDATWRKNRKQSALFVYTMAKLDALLRSLNMHIVDINGLSQEQCAEKVVAISSKVPAVTARGNAPDLLFDAVEAYNADMGV</sequence>
<feature type="chain" id="PRO_0000406816" description="Thymidine kinase">
    <location>
        <begin position="1"/>
        <end position="339"/>
    </location>
</feature>
<feature type="active site" description="Proton acceptor" evidence="1">
    <location>
        <position position="39"/>
    </location>
</feature>
<feature type="binding site" evidence="1">
    <location>
        <begin position="11"/>
        <end position="18"/>
    </location>
    <ligand>
        <name>ATP</name>
        <dbReference type="ChEBI" id="CHEBI:30616"/>
    </ligand>
</feature>
<feature type="binding site" evidence="1">
    <location>
        <position position="59"/>
    </location>
    <ligand>
        <name>substrate</name>
    </ligand>
</feature>
<feature type="binding site" evidence="1">
    <location>
        <position position="83"/>
    </location>
    <ligand>
        <name>substrate</name>
    </ligand>
</feature>
<feature type="binding site" evidence="1">
    <location>
        <position position="176"/>
    </location>
    <ligand>
        <name>ATP</name>
        <dbReference type="ChEBI" id="CHEBI:30616"/>
    </ligand>
</feature>
<feature type="binding site" evidence="1">
    <location>
        <position position="182"/>
    </location>
    <ligand>
        <name>substrate</name>
    </ligand>
</feature>